<evidence type="ECO:0000255" key="1"/>
<evidence type="ECO:0000256" key="2">
    <source>
        <dbReference type="SAM" id="MobiDB-lite"/>
    </source>
</evidence>
<evidence type="ECO:0000269" key="3">
    <source>
    </source>
</evidence>
<evidence type="ECO:0000303" key="4">
    <source>
    </source>
</evidence>
<evidence type="ECO:0000305" key="5"/>
<name>HLP1_PLARH</name>
<sequence length="240" mass="24549">MQYKLILLVVGLFQASLAYPYADGESVPHPSKDVAPPDTQDSSTQTEVTTQKGWIKQGVETITGMIKGQADIAKDAVGIAGTGTHMGAKITSAAGELGTGIGNAALQGGLQIGAMGVEAGANLAHQGIGLVDKWGQILPGFLGKGVQSVANLAGNIVDKAENIGKGVLEKVGAAGDKGFKWVDSKIKDTANSVDTTVNHITGKIQEGIDKGANTLTGGIDNTLGKLKDIVNNIRPKPVTA</sequence>
<keyword id="KW-0964">Secreted</keyword>
<keyword id="KW-0732">Signal</keyword>
<dbReference type="EMBL" id="MN208319">
    <property type="protein sequence ID" value="QHB21508.1"/>
    <property type="molecule type" value="mRNA"/>
</dbReference>
<dbReference type="GO" id="GO:0005576">
    <property type="term" value="C:extracellular region"/>
    <property type="evidence" value="ECO:0007669"/>
    <property type="project" value="UniProtKB-SubCell"/>
</dbReference>
<dbReference type="Gene3D" id="1.20.120.20">
    <property type="entry name" value="Apolipoprotein"/>
    <property type="match status" value="1"/>
</dbReference>
<comment type="subcellular location">
    <subcellularLocation>
        <location evidence="3">Secreted</location>
    </subcellularLocation>
</comment>
<comment type="tissue specificity">
    <text evidence="3">Expressed by the venom gland (anterior main gland) (at protein level).</text>
</comment>
<feature type="signal peptide" evidence="1">
    <location>
        <begin position="1"/>
        <end position="18"/>
    </location>
</feature>
<feature type="chain" id="PRO_5025582044" description="Venom hemolysin-like protein 1" evidence="5">
    <location>
        <begin position="19"/>
        <end position="240"/>
    </location>
</feature>
<feature type="region of interest" description="Disordered" evidence="2">
    <location>
        <begin position="25"/>
        <end position="50"/>
    </location>
</feature>
<feature type="compositionally biased region" description="Polar residues" evidence="2">
    <location>
        <begin position="39"/>
        <end position="50"/>
    </location>
</feature>
<accession>A0A6B9L6A5</accession>
<organism>
    <name type="scientific">Platymeris rhadamanthus</name>
    <name type="common">Red spot assassin bug</name>
    <dbReference type="NCBI Taxonomy" id="1134088"/>
    <lineage>
        <taxon>Eukaryota</taxon>
        <taxon>Metazoa</taxon>
        <taxon>Ecdysozoa</taxon>
        <taxon>Arthropoda</taxon>
        <taxon>Hexapoda</taxon>
        <taxon>Insecta</taxon>
        <taxon>Pterygota</taxon>
        <taxon>Neoptera</taxon>
        <taxon>Paraneoptera</taxon>
        <taxon>Hemiptera</taxon>
        <taxon>Heteroptera</taxon>
        <taxon>Panheteroptera</taxon>
        <taxon>Cimicomorpha</taxon>
        <taxon>Reduviidae</taxon>
        <taxon>Platymeris</taxon>
    </lineage>
</organism>
<protein>
    <recommendedName>
        <fullName evidence="4">Venom hemolysin-like protein 1</fullName>
    </recommendedName>
</protein>
<proteinExistence type="evidence at protein level"/>
<reference key="1">
    <citation type="journal article" date="2019" name="Toxins">
        <title>Missiles of mass disruption: composition and glandular origin of venom used as a projectile defensive weapon by the assassin bug Platymeris rhadamanthus.</title>
        <authorList>
            <person name="Walker A.A."/>
            <person name="Robinson S.D."/>
            <person name="Undheim E.A.B."/>
            <person name="Jin J."/>
            <person name="Han X."/>
            <person name="Fry B.G."/>
            <person name="Vetter I."/>
            <person name="King G.F."/>
        </authorList>
    </citation>
    <scope>NUCLEOTIDE SEQUENCE [MRNA]</scope>
    <scope>IDENTIFICATION BY MASS SPECTROMETRY</scope>
    <scope>SUBCELLULAR LOCATION</scope>
    <scope>TISSUE SPECIFICITY</scope>
    <source>
        <tissue>Venom</tissue>
        <tissue>Venom gland</tissue>
    </source>
</reference>